<comment type="function">
    <text evidence="1">Catalyzes the hydrolysis of the adenine ring of phosphoribosyl-AMP.</text>
</comment>
<comment type="catalytic activity">
    <reaction evidence="1">
        <text>1-(5-phospho-beta-D-ribosyl)-5'-AMP + H2O = 1-(5-phospho-beta-D-ribosyl)-5-[(5-phospho-beta-D-ribosylamino)methylideneamino]imidazole-4-carboxamide</text>
        <dbReference type="Rhea" id="RHEA:20049"/>
        <dbReference type="ChEBI" id="CHEBI:15377"/>
        <dbReference type="ChEBI" id="CHEBI:58435"/>
        <dbReference type="ChEBI" id="CHEBI:59457"/>
        <dbReference type="EC" id="3.5.4.19"/>
    </reaction>
</comment>
<comment type="cofactor">
    <cofactor evidence="1">
        <name>Mg(2+)</name>
        <dbReference type="ChEBI" id="CHEBI:18420"/>
    </cofactor>
    <text evidence="1">Binds 1 Mg(2+) ion per subunit.</text>
</comment>
<comment type="cofactor">
    <cofactor evidence="1">
        <name>Zn(2+)</name>
        <dbReference type="ChEBI" id="CHEBI:29105"/>
    </cofactor>
    <text evidence="1">Binds 1 zinc ion per subunit.</text>
</comment>
<comment type="pathway">
    <text evidence="1">Amino-acid biosynthesis; L-histidine biosynthesis; L-histidine from 5-phospho-alpha-D-ribose 1-diphosphate: step 3/9.</text>
</comment>
<comment type="subunit">
    <text evidence="1">Homodimer.</text>
</comment>
<comment type="subcellular location">
    <subcellularLocation>
        <location evidence="1">Cytoplasm</location>
    </subcellularLocation>
</comment>
<comment type="similarity">
    <text evidence="1">Belongs to the PRA-CH family.</text>
</comment>
<keyword id="KW-0028">Amino-acid biosynthesis</keyword>
<keyword id="KW-0963">Cytoplasm</keyword>
<keyword id="KW-0368">Histidine biosynthesis</keyword>
<keyword id="KW-0378">Hydrolase</keyword>
<keyword id="KW-0460">Magnesium</keyword>
<keyword id="KW-0479">Metal-binding</keyword>
<keyword id="KW-1185">Reference proteome</keyword>
<keyword id="KW-0862">Zinc</keyword>
<gene>
    <name evidence="1" type="primary">hisI</name>
    <name type="ordered locus">BP3774</name>
</gene>
<organism>
    <name type="scientific">Bordetella pertussis (strain Tohama I / ATCC BAA-589 / NCTC 13251)</name>
    <dbReference type="NCBI Taxonomy" id="257313"/>
    <lineage>
        <taxon>Bacteria</taxon>
        <taxon>Pseudomonadati</taxon>
        <taxon>Pseudomonadota</taxon>
        <taxon>Betaproteobacteria</taxon>
        <taxon>Burkholderiales</taxon>
        <taxon>Alcaligenaceae</taxon>
        <taxon>Bordetella</taxon>
    </lineage>
</organism>
<accession>Q7VSY5</accession>
<protein>
    <recommendedName>
        <fullName evidence="1">Phosphoribosyl-AMP cyclohydrolase</fullName>
        <shortName evidence="1">PRA-CH</shortName>
        <ecNumber evidence="1">3.5.4.19</ecNumber>
    </recommendedName>
</protein>
<evidence type="ECO:0000255" key="1">
    <source>
        <dbReference type="HAMAP-Rule" id="MF_01021"/>
    </source>
</evidence>
<reference key="1">
    <citation type="journal article" date="2003" name="Nat. Genet.">
        <title>Comparative analysis of the genome sequences of Bordetella pertussis, Bordetella parapertussis and Bordetella bronchiseptica.</title>
        <authorList>
            <person name="Parkhill J."/>
            <person name="Sebaihia M."/>
            <person name="Preston A."/>
            <person name="Murphy L.D."/>
            <person name="Thomson N.R."/>
            <person name="Harris D.E."/>
            <person name="Holden M.T.G."/>
            <person name="Churcher C.M."/>
            <person name="Bentley S.D."/>
            <person name="Mungall K.L."/>
            <person name="Cerdeno-Tarraga A.-M."/>
            <person name="Temple L."/>
            <person name="James K.D."/>
            <person name="Harris B."/>
            <person name="Quail M.A."/>
            <person name="Achtman M."/>
            <person name="Atkin R."/>
            <person name="Baker S."/>
            <person name="Basham D."/>
            <person name="Bason N."/>
            <person name="Cherevach I."/>
            <person name="Chillingworth T."/>
            <person name="Collins M."/>
            <person name="Cronin A."/>
            <person name="Davis P."/>
            <person name="Doggett J."/>
            <person name="Feltwell T."/>
            <person name="Goble A."/>
            <person name="Hamlin N."/>
            <person name="Hauser H."/>
            <person name="Holroyd S."/>
            <person name="Jagels K."/>
            <person name="Leather S."/>
            <person name="Moule S."/>
            <person name="Norberczak H."/>
            <person name="O'Neil S."/>
            <person name="Ormond D."/>
            <person name="Price C."/>
            <person name="Rabbinowitsch E."/>
            <person name="Rutter S."/>
            <person name="Sanders M."/>
            <person name="Saunders D."/>
            <person name="Seeger K."/>
            <person name="Sharp S."/>
            <person name="Simmonds M."/>
            <person name="Skelton J."/>
            <person name="Squares R."/>
            <person name="Squares S."/>
            <person name="Stevens K."/>
            <person name="Unwin L."/>
            <person name="Whitehead S."/>
            <person name="Barrell B.G."/>
            <person name="Maskell D.J."/>
        </authorList>
    </citation>
    <scope>NUCLEOTIDE SEQUENCE [LARGE SCALE GENOMIC DNA]</scope>
    <source>
        <strain>Tohama I / ATCC BAA-589 / NCTC 13251</strain>
    </source>
</reference>
<feature type="chain" id="PRO_0000136464" description="Phosphoribosyl-AMP cyclohydrolase">
    <location>
        <begin position="1"/>
        <end position="134"/>
    </location>
</feature>
<feature type="binding site" evidence="1">
    <location>
        <position position="80"/>
    </location>
    <ligand>
        <name>Mg(2+)</name>
        <dbReference type="ChEBI" id="CHEBI:18420"/>
    </ligand>
</feature>
<feature type="binding site" evidence="1">
    <location>
        <position position="81"/>
    </location>
    <ligand>
        <name>Zn(2+)</name>
        <dbReference type="ChEBI" id="CHEBI:29105"/>
        <note>ligand shared between dimeric partners</note>
    </ligand>
</feature>
<feature type="binding site" evidence="1">
    <location>
        <position position="82"/>
    </location>
    <ligand>
        <name>Mg(2+)</name>
        <dbReference type="ChEBI" id="CHEBI:18420"/>
    </ligand>
</feature>
<feature type="binding site" evidence="1">
    <location>
        <position position="84"/>
    </location>
    <ligand>
        <name>Mg(2+)</name>
        <dbReference type="ChEBI" id="CHEBI:18420"/>
    </ligand>
</feature>
<feature type="binding site" evidence="1">
    <location>
        <position position="98"/>
    </location>
    <ligand>
        <name>Zn(2+)</name>
        <dbReference type="ChEBI" id="CHEBI:29105"/>
        <note>ligand shared between dimeric partners</note>
    </ligand>
</feature>
<feature type="binding site" evidence="1">
    <location>
        <position position="105"/>
    </location>
    <ligand>
        <name>Zn(2+)</name>
        <dbReference type="ChEBI" id="CHEBI:29105"/>
        <note>ligand shared between dimeric partners</note>
    </ligand>
</feature>
<proteinExistence type="inferred from homology"/>
<sequence>MNTEPTWMAEVVFDENGLIPAIAQDAETGQILMVAWMSREALAETAATGRAVYWSRSRQRLWRKGEESGHAQDVHELRLDCDGDVILLKVHQNGGIACHTGRASCFYRRLEGTASQAEWITIDPVLKDPELIYK</sequence>
<dbReference type="EC" id="3.5.4.19" evidence="1"/>
<dbReference type="EMBL" id="BX640422">
    <property type="protein sequence ID" value="CAE44030.1"/>
    <property type="molecule type" value="Genomic_DNA"/>
</dbReference>
<dbReference type="RefSeq" id="NP_882275.1">
    <property type="nucleotide sequence ID" value="NC_002929.2"/>
</dbReference>
<dbReference type="RefSeq" id="WP_010931645.1">
    <property type="nucleotide sequence ID" value="NZ_CP039022.1"/>
</dbReference>
<dbReference type="SMR" id="Q7VSY5"/>
<dbReference type="STRING" id="257313.BP3774"/>
<dbReference type="PaxDb" id="257313-BP3774"/>
<dbReference type="GeneID" id="69599999"/>
<dbReference type="KEGG" id="bpe:BP3774"/>
<dbReference type="PATRIC" id="fig|257313.5.peg.4078"/>
<dbReference type="eggNOG" id="COG0139">
    <property type="taxonomic scope" value="Bacteria"/>
</dbReference>
<dbReference type="HOGENOM" id="CLU_048577_5_0_4"/>
<dbReference type="UniPathway" id="UPA00031">
    <property type="reaction ID" value="UER00008"/>
</dbReference>
<dbReference type="Proteomes" id="UP000002676">
    <property type="component" value="Chromosome"/>
</dbReference>
<dbReference type="GO" id="GO:0005737">
    <property type="term" value="C:cytoplasm"/>
    <property type="evidence" value="ECO:0007669"/>
    <property type="project" value="UniProtKB-SubCell"/>
</dbReference>
<dbReference type="GO" id="GO:0000287">
    <property type="term" value="F:magnesium ion binding"/>
    <property type="evidence" value="ECO:0007669"/>
    <property type="project" value="UniProtKB-UniRule"/>
</dbReference>
<dbReference type="GO" id="GO:0004635">
    <property type="term" value="F:phosphoribosyl-AMP cyclohydrolase activity"/>
    <property type="evidence" value="ECO:0007669"/>
    <property type="project" value="UniProtKB-UniRule"/>
</dbReference>
<dbReference type="GO" id="GO:0008270">
    <property type="term" value="F:zinc ion binding"/>
    <property type="evidence" value="ECO:0007669"/>
    <property type="project" value="UniProtKB-UniRule"/>
</dbReference>
<dbReference type="GO" id="GO:0000105">
    <property type="term" value="P:L-histidine biosynthetic process"/>
    <property type="evidence" value="ECO:0007669"/>
    <property type="project" value="UniProtKB-UniRule"/>
</dbReference>
<dbReference type="FunFam" id="3.10.20.810:FF:000001">
    <property type="entry name" value="Histidine biosynthesis bifunctional protein HisIE"/>
    <property type="match status" value="1"/>
</dbReference>
<dbReference type="Gene3D" id="3.10.20.810">
    <property type="entry name" value="Phosphoribosyl-AMP cyclohydrolase"/>
    <property type="match status" value="1"/>
</dbReference>
<dbReference type="HAMAP" id="MF_01021">
    <property type="entry name" value="HisI"/>
    <property type="match status" value="1"/>
</dbReference>
<dbReference type="InterPro" id="IPR026660">
    <property type="entry name" value="PRA-CH"/>
</dbReference>
<dbReference type="InterPro" id="IPR002496">
    <property type="entry name" value="PRib_AMP_CycHydrolase_dom"/>
</dbReference>
<dbReference type="InterPro" id="IPR038019">
    <property type="entry name" value="PRib_AMP_CycHydrolase_sf"/>
</dbReference>
<dbReference type="NCBIfam" id="NF000768">
    <property type="entry name" value="PRK00051.1"/>
    <property type="match status" value="1"/>
</dbReference>
<dbReference type="PANTHER" id="PTHR42945">
    <property type="entry name" value="HISTIDINE BIOSYNTHESIS BIFUNCTIONAL PROTEIN"/>
    <property type="match status" value="1"/>
</dbReference>
<dbReference type="PANTHER" id="PTHR42945:SF1">
    <property type="entry name" value="HISTIDINE BIOSYNTHESIS BIFUNCTIONAL PROTEIN HIS7"/>
    <property type="match status" value="1"/>
</dbReference>
<dbReference type="Pfam" id="PF01502">
    <property type="entry name" value="PRA-CH"/>
    <property type="match status" value="1"/>
</dbReference>
<dbReference type="SUPFAM" id="SSF141734">
    <property type="entry name" value="HisI-like"/>
    <property type="match status" value="1"/>
</dbReference>
<name>HIS3_BORPE</name>